<proteinExistence type="inferred from homology"/>
<accession>Q6ALV4</accession>
<name>PAND_DESPS</name>
<evidence type="ECO:0000255" key="1">
    <source>
        <dbReference type="HAMAP-Rule" id="MF_00446"/>
    </source>
</evidence>
<evidence type="ECO:0000305" key="2"/>
<feature type="chain" id="PRO_0000023071" description="Aspartate 1-decarboxylase beta chain" evidence="1">
    <location>
        <begin position="1"/>
        <end position="24"/>
    </location>
</feature>
<feature type="chain" id="PRO_0000023072" description="Aspartate 1-decarboxylase alpha chain" evidence="1">
    <location>
        <begin position="25"/>
        <end position="119"/>
    </location>
</feature>
<feature type="active site" description="Schiff-base intermediate with substrate; via pyruvic acid" evidence="1">
    <location>
        <position position="25"/>
    </location>
</feature>
<feature type="active site" description="Proton donor" evidence="1">
    <location>
        <position position="58"/>
    </location>
</feature>
<feature type="binding site" evidence="1">
    <location>
        <position position="57"/>
    </location>
    <ligand>
        <name>substrate</name>
    </ligand>
</feature>
<feature type="binding site" evidence="1">
    <location>
        <begin position="73"/>
        <end position="75"/>
    </location>
    <ligand>
        <name>substrate</name>
    </ligand>
</feature>
<feature type="modified residue" description="Pyruvic acid (Ser)" evidence="1">
    <location>
        <position position="25"/>
    </location>
</feature>
<dbReference type="EC" id="4.1.1.11" evidence="1"/>
<dbReference type="EMBL" id="CR522870">
    <property type="protein sequence ID" value="CAG36671.1"/>
    <property type="status" value="ALT_INIT"/>
    <property type="molecule type" value="Genomic_DNA"/>
</dbReference>
<dbReference type="RefSeq" id="WP_041277868.1">
    <property type="nucleotide sequence ID" value="NC_006138.1"/>
</dbReference>
<dbReference type="SMR" id="Q6ALV4"/>
<dbReference type="STRING" id="177439.DP1942"/>
<dbReference type="KEGG" id="dps:DP1942"/>
<dbReference type="eggNOG" id="COG0853">
    <property type="taxonomic scope" value="Bacteria"/>
</dbReference>
<dbReference type="HOGENOM" id="CLU_115305_2_0_7"/>
<dbReference type="OrthoDB" id="9803983at2"/>
<dbReference type="UniPathway" id="UPA00028">
    <property type="reaction ID" value="UER00002"/>
</dbReference>
<dbReference type="Proteomes" id="UP000000602">
    <property type="component" value="Chromosome"/>
</dbReference>
<dbReference type="GO" id="GO:0005829">
    <property type="term" value="C:cytosol"/>
    <property type="evidence" value="ECO:0007669"/>
    <property type="project" value="TreeGrafter"/>
</dbReference>
<dbReference type="GO" id="GO:0004068">
    <property type="term" value="F:aspartate 1-decarboxylase activity"/>
    <property type="evidence" value="ECO:0007669"/>
    <property type="project" value="UniProtKB-UniRule"/>
</dbReference>
<dbReference type="GO" id="GO:0006523">
    <property type="term" value="P:alanine biosynthetic process"/>
    <property type="evidence" value="ECO:0007669"/>
    <property type="project" value="InterPro"/>
</dbReference>
<dbReference type="GO" id="GO:0015940">
    <property type="term" value="P:pantothenate biosynthetic process"/>
    <property type="evidence" value="ECO:0007669"/>
    <property type="project" value="UniProtKB-UniRule"/>
</dbReference>
<dbReference type="CDD" id="cd06919">
    <property type="entry name" value="Asp_decarbox"/>
    <property type="match status" value="1"/>
</dbReference>
<dbReference type="Gene3D" id="2.40.40.20">
    <property type="match status" value="1"/>
</dbReference>
<dbReference type="HAMAP" id="MF_00446">
    <property type="entry name" value="PanD"/>
    <property type="match status" value="1"/>
</dbReference>
<dbReference type="InterPro" id="IPR009010">
    <property type="entry name" value="Asp_de-COase-like_dom_sf"/>
</dbReference>
<dbReference type="InterPro" id="IPR003190">
    <property type="entry name" value="Asp_decarbox"/>
</dbReference>
<dbReference type="NCBIfam" id="TIGR00223">
    <property type="entry name" value="panD"/>
    <property type="match status" value="1"/>
</dbReference>
<dbReference type="PANTHER" id="PTHR21012">
    <property type="entry name" value="ASPARTATE 1-DECARBOXYLASE"/>
    <property type="match status" value="1"/>
</dbReference>
<dbReference type="PANTHER" id="PTHR21012:SF0">
    <property type="entry name" value="ASPARTATE 1-DECARBOXYLASE"/>
    <property type="match status" value="1"/>
</dbReference>
<dbReference type="Pfam" id="PF02261">
    <property type="entry name" value="Asp_decarbox"/>
    <property type="match status" value="1"/>
</dbReference>
<dbReference type="PIRSF" id="PIRSF006246">
    <property type="entry name" value="Asp_decarbox"/>
    <property type="match status" value="1"/>
</dbReference>
<dbReference type="SUPFAM" id="SSF50692">
    <property type="entry name" value="ADC-like"/>
    <property type="match status" value="1"/>
</dbReference>
<protein>
    <recommendedName>
        <fullName evidence="1">Aspartate 1-decarboxylase</fullName>
        <ecNumber evidence="1">4.1.1.11</ecNumber>
    </recommendedName>
    <alternativeName>
        <fullName evidence="1">Aspartate alpha-decarboxylase</fullName>
    </alternativeName>
    <component>
        <recommendedName>
            <fullName evidence="1">Aspartate 1-decarboxylase beta chain</fullName>
        </recommendedName>
    </component>
    <component>
        <recommendedName>
            <fullName evidence="1">Aspartate 1-decarboxylase alpha chain</fullName>
        </recommendedName>
    </component>
</protein>
<keyword id="KW-0068">Autocatalytic cleavage</keyword>
<keyword id="KW-0963">Cytoplasm</keyword>
<keyword id="KW-0210">Decarboxylase</keyword>
<keyword id="KW-0456">Lyase</keyword>
<keyword id="KW-0566">Pantothenate biosynthesis</keyword>
<keyword id="KW-0670">Pyruvate</keyword>
<keyword id="KW-1185">Reference proteome</keyword>
<keyword id="KW-0704">Schiff base</keyword>
<keyword id="KW-0865">Zymogen</keyword>
<sequence length="119" mass="13172">MLHQMMKAKLHRATISAADLNYEGSLTIDTDLLKASGIRPYERIYVYNVNNGERFETYAIEGEAGSGAIQLNGAAARKGMIGDFLIIVTYALCSDDEVDEHRPNVVLLNPDNTIKEIVK</sequence>
<organism>
    <name type="scientific">Desulfotalea psychrophila (strain LSv54 / DSM 12343)</name>
    <dbReference type="NCBI Taxonomy" id="177439"/>
    <lineage>
        <taxon>Bacteria</taxon>
        <taxon>Pseudomonadati</taxon>
        <taxon>Thermodesulfobacteriota</taxon>
        <taxon>Desulfobulbia</taxon>
        <taxon>Desulfobulbales</taxon>
        <taxon>Desulfocapsaceae</taxon>
        <taxon>Desulfotalea</taxon>
    </lineage>
</organism>
<reference key="1">
    <citation type="journal article" date="2004" name="Environ. Microbiol.">
        <title>The genome of Desulfotalea psychrophila, a sulfate-reducing bacterium from permanently cold Arctic sediments.</title>
        <authorList>
            <person name="Rabus R."/>
            <person name="Ruepp A."/>
            <person name="Frickey T."/>
            <person name="Rattei T."/>
            <person name="Fartmann B."/>
            <person name="Stark M."/>
            <person name="Bauer M."/>
            <person name="Zibat A."/>
            <person name="Lombardot T."/>
            <person name="Becker I."/>
            <person name="Amann J."/>
            <person name="Gellner K."/>
            <person name="Teeling H."/>
            <person name="Leuschner W.D."/>
            <person name="Gloeckner F.-O."/>
            <person name="Lupas A.N."/>
            <person name="Amann R."/>
            <person name="Klenk H.-P."/>
        </authorList>
    </citation>
    <scope>NUCLEOTIDE SEQUENCE [LARGE SCALE GENOMIC DNA]</scope>
    <source>
        <strain>DSM 12343 / LSv54</strain>
    </source>
</reference>
<gene>
    <name evidence="1" type="primary">panD</name>
    <name type="ordered locus">DP1942</name>
</gene>
<comment type="function">
    <text evidence="1">Catalyzes the pyruvoyl-dependent decarboxylation of aspartate to produce beta-alanine.</text>
</comment>
<comment type="catalytic activity">
    <reaction evidence="1">
        <text>L-aspartate + H(+) = beta-alanine + CO2</text>
        <dbReference type="Rhea" id="RHEA:19497"/>
        <dbReference type="ChEBI" id="CHEBI:15378"/>
        <dbReference type="ChEBI" id="CHEBI:16526"/>
        <dbReference type="ChEBI" id="CHEBI:29991"/>
        <dbReference type="ChEBI" id="CHEBI:57966"/>
        <dbReference type="EC" id="4.1.1.11"/>
    </reaction>
</comment>
<comment type="cofactor">
    <cofactor evidence="1">
        <name>pyruvate</name>
        <dbReference type="ChEBI" id="CHEBI:15361"/>
    </cofactor>
    <text evidence="1">Binds 1 pyruvoyl group covalently per subunit.</text>
</comment>
<comment type="pathway">
    <text evidence="1">Cofactor biosynthesis; (R)-pantothenate biosynthesis; beta-alanine from L-aspartate: step 1/1.</text>
</comment>
<comment type="subunit">
    <text evidence="1">Heterooctamer of four alpha and four beta subunits.</text>
</comment>
<comment type="subcellular location">
    <subcellularLocation>
        <location evidence="1">Cytoplasm</location>
    </subcellularLocation>
</comment>
<comment type="PTM">
    <text evidence="1">Is synthesized initially as an inactive proenzyme, which is activated by self-cleavage at a specific serine bond to produce a beta-subunit with a hydroxyl group at its C-terminus and an alpha-subunit with a pyruvoyl group at its N-terminus.</text>
</comment>
<comment type="similarity">
    <text evidence="1">Belongs to the PanD family.</text>
</comment>
<comment type="sequence caution" evidence="2">
    <conflict type="erroneous initiation">
        <sequence resource="EMBL-CDS" id="CAG36671"/>
    </conflict>
</comment>